<protein>
    <recommendedName>
        <fullName evidence="1">Holo-[acyl-carrier-protein] synthase</fullName>
        <shortName evidence="1">Holo-ACP synthase</shortName>
        <ecNumber evidence="1">2.7.8.7</ecNumber>
    </recommendedName>
    <alternativeName>
        <fullName evidence="1">4'-phosphopantetheinyl transferase AcpS</fullName>
    </alternativeName>
</protein>
<sequence>MIVALGADLVEIARVERLLSRHGERALRRLFHEEEVAYALARQNPFPSLAARLAAKEAFQKCWPESLSWKEVWVGMEGKRPALRFAPRIEARMAEEGLFAHLSLSHERSHALAVVVLEARARGGG</sequence>
<accession>Q5SII1</accession>
<organism>
    <name type="scientific">Thermus thermophilus (strain ATCC 27634 / DSM 579 / HB8)</name>
    <dbReference type="NCBI Taxonomy" id="300852"/>
    <lineage>
        <taxon>Bacteria</taxon>
        <taxon>Thermotogati</taxon>
        <taxon>Deinococcota</taxon>
        <taxon>Deinococci</taxon>
        <taxon>Thermales</taxon>
        <taxon>Thermaceae</taxon>
        <taxon>Thermus</taxon>
    </lineage>
</organism>
<dbReference type="EC" id="2.7.8.7" evidence="1"/>
<dbReference type="EMBL" id="AP008226">
    <property type="protein sequence ID" value="BAD71211.1"/>
    <property type="molecule type" value="Genomic_DNA"/>
</dbReference>
<dbReference type="RefSeq" id="WP_011173441.1">
    <property type="nucleotide sequence ID" value="NC_006461.1"/>
</dbReference>
<dbReference type="RefSeq" id="YP_144654.1">
    <property type="nucleotide sequence ID" value="NC_006461.1"/>
</dbReference>
<dbReference type="SMR" id="Q5SII1"/>
<dbReference type="EnsemblBacteria" id="BAD71211">
    <property type="protein sequence ID" value="BAD71211"/>
    <property type="gene ID" value="BAD71211"/>
</dbReference>
<dbReference type="GeneID" id="3169698"/>
<dbReference type="KEGG" id="ttj:TTHA1388"/>
<dbReference type="PATRIC" id="fig|300852.9.peg.1364"/>
<dbReference type="eggNOG" id="COG0736">
    <property type="taxonomic scope" value="Bacteria"/>
</dbReference>
<dbReference type="HOGENOM" id="CLU_089696_0_2_0"/>
<dbReference type="PhylomeDB" id="Q5SII1"/>
<dbReference type="Proteomes" id="UP000000532">
    <property type="component" value="Chromosome"/>
</dbReference>
<dbReference type="GO" id="GO:0005737">
    <property type="term" value="C:cytoplasm"/>
    <property type="evidence" value="ECO:0007669"/>
    <property type="project" value="UniProtKB-SubCell"/>
</dbReference>
<dbReference type="GO" id="GO:0008897">
    <property type="term" value="F:holo-[acyl-carrier-protein] synthase activity"/>
    <property type="evidence" value="ECO:0007669"/>
    <property type="project" value="UniProtKB-UniRule"/>
</dbReference>
<dbReference type="GO" id="GO:0000287">
    <property type="term" value="F:magnesium ion binding"/>
    <property type="evidence" value="ECO:0007669"/>
    <property type="project" value="UniProtKB-UniRule"/>
</dbReference>
<dbReference type="GO" id="GO:0006633">
    <property type="term" value="P:fatty acid biosynthetic process"/>
    <property type="evidence" value="ECO:0007669"/>
    <property type="project" value="UniProtKB-UniRule"/>
</dbReference>
<dbReference type="Gene3D" id="3.90.470.20">
    <property type="entry name" value="4'-phosphopantetheinyl transferase domain"/>
    <property type="match status" value="1"/>
</dbReference>
<dbReference type="HAMAP" id="MF_00101">
    <property type="entry name" value="AcpS"/>
    <property type="match status" value="1"/>
</dbReference>
<dbReference type="InterPro" id="IPR008278">
    <property type="entry name" value="4-PPantetheinyl_Trfase_dom"/>
</dbReference>
<dbReference type="InterPro" id="IPR037143">
    <property type="entry name" value="4-PPantetheinyl_Trfase_dom_sf"/>
</dbReference>
<dbReference type="InterPro" id="IPR002582">
    <property type="entry name" value="ACPS"/>
</dbReference>
<dbReference type="InterPro" id="IPR004568">
    <property type="entry name" value="Ppantetheine-prot_Trfase_dom"/>
</dbReference>
<dbReference type="NCBIfam" id="TIGR00556">
    <property type="entry name" value="pantethn_trn"/>
    <property type="match status" value="1"/>
</dbReference>
<dbReference type="NCBIfam" id="NF011256">
    <property type="entry name" value="PRK14662.1"/>
    <property type="match status" value="1"/>
</dbReference>
<dbReference type="Pfam" id="PF01648">
    <property type="entry name" value="ACPS"/>
    <property type="match status" value="1"/>
</dbReference>
<dbReference type="SUPFAM" id="SSF56214">
    <property type="entry name" value="4'-phosphopantetheinyl transferase"/>
    <property type="match status" value="1"/>
</dbReference>
<feature type="chain" id="PRO_0000228314" description="Holo-[acyl-carrier-protein] synthase">
    <location>
        <begin position="1"/>
        <end position="125"/>
    </location>
</feature>
<feature type="binding site" evidence="1">
    <location>
        <position position="8"/>
    </location>
    <ligand>
        <name>Mg(2+)</name>
        <dbReference type="ChEBI" id="CHEBI:18420"/>
    </ligand>
</feature>
<feature type="binding site" evidence="1">
    <location>
        <position position="57"/>
    </location>
    <ligand>
        <name>Mg(2+)</name>
        <dbReference type="ChEBI" id="CHEBI:18420"/>
    </ligand>
</feature>
<name>ACPS_THET8</name>
<proteinExistence type="inferred from homology"/>
<evidence type="ECO:0000255" key="1">
    <source>
        <dbReference type="HAMAP-Rule" id="MF_00101"/>
    </source>
</evidence>
<gene>
    <name evidence="1" type="primary">acpS</name>
    <name type="ordered locus">TTHA1388</name>
</gene>
<comment type="function">
    <text evidence="1">Transfers the 4'-phosphopantetheine moiety from coenzyme A to a Ser of acyl-carrier-protein.</text>
</comment>
<comment type="catalytic activity">
    <reaction evidence="1">
        <text>apo-[ACP] + CoA = holo-[ACP] + adenosine 3',5'-bisphosphate + H(+)</text>
        <dbReference type="Rhea" id="RHEA:12068"/>
        <dbReference type="Rhea" id="RHEA-COMP:9685"/>
        <dbReference type="Rhea" id="RHEA-COMP:9690"/>
        <dbReference type="ChEBI" id="CHEBI:15378"/>
        <dbReference type="ChEBI" id="CHEBI:29999"/>
        <dbReference type="ChEBI" id="CHEBI:57287"/>
        <dbReference type="ChEBI" id="CHEBI:58343"/>
        <dbReference type="ChEBI" id="CHEBI:64479"/>
        <dbReference type="EC" id="2.7.8.7"/>
    </reaction>
</comment>
<comment type="cofactor">
    <cofactor evidence="1">
        <name>Mg(2+)</name>
        <dbReference type="ChEBI" id="CHEBI:18420"/>
    </cofactor>
</comment>
<comment type="subcellular location">
    <subcellularLocation>
        <location evidence="1">Cytoplasm</location>
    </subcellularLocation>
</comment>
<comment type="similarity">
    <text evidence="1">Belongs to the P-Pant transferase superfamily. AcpS family.</text>
</comment>
<reference key="1">
    <citation type="submission" date="2004-11" db="EMBL/GenBank/DDBJ databases">
        <title>Complete genome sequence of Thermus thermophilus HB8.</title>
        <authorList>
            <person name="Masui R."/>
            <person name="Kurokawa K."/>
            <person name="Nakagawa N."/>
            <person name="Tokunaga F."/>
            <person name="Koyama Y."/>
            <person name="Shibata T."/>
            <person name="Oshima T."/>
            <person name="Yokoyama S."/>
            <person name="Yasunaga T."/>
            <person name="Kuramitsu S."/>
        </authorList>
    </citation>
    <scope>NUCLEOTIDE SEQUENCE [LARGE SCALE GENOMIC DNA]</scope>
    <source>
        <strain>ATCC 27634 / DSM 579 / HB8</strain>
    </source>
</reference>
<keyword id="KW-0963">Cytoplasm</keyword>
<keyword id="KW-0275">Fatty acid biosynthesis</keyword>
<keyword id="KW-0276">Fatty acid metabolism</keyword>
<keyword id="KW-0444">Lipid biosynthesis</keyword>
<keyword id="KW-0443">Lipid metabolism</keyword>
<keyword id="KW-0460">Magnesium</keyword>
<keyword id="KW-0479">Metal-binding</keyword>
<keyword id="KW-1185">Reference proteome</keyword>
<keyword id="KW-0808">Transferase</keyword>